<feature type="chain" id="PRO_0000152583" description="Atypical chemokine receptor 1">
    <location>
        <begin position="1"/>
        <end position="336"/>
    </location>
</feature>
<feature type="topological domain" description="Extracellular" evidence="2">
    <location>
        <begin position="1"/>
        <end position="63"/>
    </location>
</feature>
<feature type="transmembrane region" description="Helical; Name=1" evidence="2">
    <location>
        <begin position="64"/>
        <end position="84"/>
    </location>
</feature>
<feature type="topological domain" description="Cytoplasmic" evidence="2">
    <location>
        <begin position="85"/>
        <end position="95"/>
    </location>
</feature>
<feature type="transmembrane region" description="Helical; Name=2" evidence="2">
    <location>
        <begin position="96"/>
        <end position="116"/>
    </location>
</feature>
<feature type="topological domain" description="Extracellular" evidence="2">
    <location>
        <begin position="117"/>
        <end position="129"/>
    </location>
</feature>
<feature type="transmembrane region" description="Helical; Name=3" evidence="2">
    <location>
        <begin position="130"/>
        <end position="153"/>
    </location>
</feature>
<feature type="topological domain" description="Cytoplasmic" evidence="2">
    <location>
        <begin position="154"/>
        <end position="166"/>
    </location>
</feature>
<feature type="transmembrane region" description="Helical; Name=4" evidence="2">
    <location>
        <begin position="167"/>
        <end position="187"/>
    </location>
</feature>
<feature type="topological domain" description="Extracellular" evidence="2">
    <location>
        <begin position="188"/>
        <end position="207"/>
    </location>
</feature>
<feature type="transmembrane region" description="Helical; Name=5" evidence="2">
    <location>
        <begin position="208"/>
        <end position="228"/>
    </location>
</feature>
<feature type="topological domain" description="Cytoplasmic" evidence="2">
    <location>
        <begin position="229"/>
        <end position="244"/>
    </location>
</feature>
<feature type="transmembrane region" description="Helical; Name=6" evidence="2">
    <location>
        <begin position="245"/>
        <end position="265"/>
    </location>
</feature>
<feature type="topological domain" description="Extracellular" evidence="2">
    <location>
        <begin position="266"/>
        <end position="287"/>
    </location>
</feature>
<feature type="transmembrane region" description="Helical; Name=7" evidence="2">
    <location>
        <begin position="288"/>
        <end position="308"/>
    </location>
</feature>
<feature type="topological domain" description="Cytoplasmic" evidence="2">
    <location>
        <begin position="309"/>
        <end position="336"/>
    </location>
</feature>
<feature type="glycosylation site" description="N-linked (GlcNAc...) asparagine" evidence="2">
    <location>
        <position position="16"/>
    </location>
</feature>
<feature type="glycosylation site" description="N-linked (GlcNAc...) asparagine" evidence="2">
    <location>
        <position position="33"/>
    </location>
</feature>
<feature type="disulfide bond" evidence="1">
    <location>
        <begin position="51"/>
        <end position="276"/>
    </location>
</feature>
<feature type="disulfide bond" evidence="1">
    <location>
        <begin position="129"/>
        <end position="195"/>
    </location>
</feature>
<sequence>MGNCLHQAELSPSTENSSQLNLEDLWDFPYNGNDSFPEINYDASLEAAAPCYSCNLLDDSSLPFFILASVLGILASSTVLFMLFRPLFRWQLCPGWPVLAQLAVGSALFSIVVPILAPGLGNTRSSALCSLGYCVWYGSAFAQALLLGCHASLGPKLGAGQVPGLTLGLTVGLWGAAALLTVPITLASGASDGLCTPIYSTELKALQATHTVACFAIFVLLPLGLFGAKGVKKALGMGPGPWMTILWIWFIFWWPHGVVLGLDFLVRSKLLLLPTCLAQQVLDLLLNLAEALTIVHCVATPLLLALFCHQATRTLLPSLPLPERWSSPVDTLGSKS</sequence>
<protein>
    <recommendedName>
        <fullName>Atypical chemokine receptor 1</fullName>
    </recommendedName>
    <alternativeName>
        <fullName>Duffy antigen/chemokine receptor</fullName>
    </alternativeName>
    <cdAntigenName>CD234</cdAntigenName>
</protein>
<reference key="1">
    <citation type="journal article" date="2004" name="Immunogenetics">
        <title>Sequence, evolution and ligand binding properties of mammalian Duffy antigen/receptor for chemokines.</title>
        <authorList>
            <person name="Tournamille C."/>
            <person name="Blancher A."/>
            <person name="Le Van Kim C."/>
            <person name="Gane P."/>
            <person name="Apoil P.-A."/>
            <person name="Nakamoto W."/>
            <person name="Cartron J.-P."/>
            <person name="Colin Y."/>
        </authorList>
    </citation>
    <scope>NUCLEOTIDE SEQUENCE [GENOMIC DNA]</scope>
</reference>
<keyword id="KW-1015">Disulfide bond</keyword>
<keyword id="KW-0967">Endosome</keyword>
<keyword id="KW-0297">G-protein coupled receptor</keyword>
<keyword id="KW-0325">Glycoprotein</keyword>
<keyword id="KW-0472">Membrane</keyword>
<keyword id="KW-0675">Receptor</keyword>
<keyword id="KW-1185">Reference proteome</keyword>
<keyword id="KW-0807">Transducer</keyword>
<keyword id="KW-0812">Transmembrane</keyword>
<keyword id="KW-1133">Transmembrane helix</keyword>
<proteinExistence type="inferred from homology"/>
<dbReference type="EMBL" id="AF311919">
    <property type="protein sequence ID" value="AAL09454.1"/>
    <property type="molecule type" value="Genomic_DNA"/>
</dbReference>
<dbReference type="SMR" id="Q95LF4"/>
<dbReference type="GlyCosmos" id="Q95LF4">
    <property type="glycosylation" value="2 sites, No reported glycans"/>
</dbReference>
<dbReference type="Proteomes" id="UP000504640">
    <property type="component" value="Unplaced"/>
</dbReference>
<dbReference type="GO" id="GO:0005769">
    <property type="term" value="C:early endosome"/>
    <property type="evidence" value="ECO:0007669"/>
    <property type="project" value="UniProtKB-SubCell"/>
</dbReference>
<dbReference type="GO" id="GO:0016020">
    <property type="term" value="C:membrane"/>
    <property type="evidence" value="ECO:0007669"/>
    <property type="project" value="UniProtKB-SubCell"/>
</dbReference>
<dbReference type="GO" id="GO:0055037">
    <property type="term" value="C:recycling endosome"/>
    <property type="evidence" value="ECO:0007669"/>
    <property type="project" value="UniProtKB-SubCell"/>
</dbReference>
<dbReference type="GO" id="GO:0019957">
    <property type="term" value="F:C-C chemokine binding"/>
    <property type="evidence" value="ECO:0007669"/>
    <property type="project" value="TreeGrafter"/>
</dbReference>
<dbReference type="GO" id="GO:0004930">
    <property type="term" value="F:G protein-coupled receptor activity"/>
    <property type="evidence" value="ECO:0007669"/>
    <property type="project" value="UniProtKB-KW"/>
</dbReference>
<dbReference type="GO" id="GO:0070098">
    <property type="term" value="P:chemokine-mediated signaling pathway"/>
    <property type="evidence" value="ECO:0007669"/>
    <property type="project" value="InterPro"/>
</dbReference>
<dbReference type="GO" id="GO:0006954">
    <property type="term" value="P:inflammatory response"/>
    <property type="evidence" value="ECO:0007669"/>
    <property type="project" value="InterPro"/>
</dbReference>
<dbReference type="GO" id="GO:0032642">
    <property type="term" value="P:regulation of chemokine production"/>
    <property type="evidence" value="ECO:0007669"/>
    <property type="project" value="TreeGrafter"/>
</dbReference>
<dbReference type="CDD" id="cd15010">
    <property type="entry name" value="7tmA_ACKR1_DARC"/>
    <property type="match status" value="1"/>
</dbReference>
<dbReference type="FunFam" id="1.20.1070.10:FF:000266">
    <property type="entry name" value="Atypical chemokine receptor 1"/>
    <property type="match status" value="1"/>
</dbReference>
<dbReference type="Gene3D" id="1.20.1070.10">
    <property type="entry name" value="Rhodopsin 7-helix transmembrane proteins"/>
    <property type="match status" value="1"/>
</dbReference>
<dbReference type="InterPro" id="IPR005384">
    <property type="entry name" value="Duffy_chemokine_rcpt"/>
</dbReference>
<dbReference type="PANTHER" id="PTHR14181:SF1">
    <property type="entry name" value="ATYPICAL CHEMOKINE RECEPTOR 1"/>
    <property type="match status" value="1"/>
</dbReference>
<dbReference type="PANTHER" id="PTHR14181">
    <property type="entry name" value="DUFFY ANTIGEN/CHEMOKINE RECEPTOR"/>
    <property type="match status" value="1"/>
</dbReference>
<dbReference type="PRINTS" id="PR01559">
    <property type="entry name" value="DUFFYANTIGEN"/>
</dbReference>
<accession>Q95LF4</accession>
<organism>
    <name type="scientific">Sapajus apella</name>
    <name type="common">Brown-capped capuchin</name>
    <name type="synonym">Cebus apella</name>
    <dbReference type="NCBI Taxonomy" id="9515"/>
    <lineage>
        <taxon>Eukaryota</taxon>
        <taxon>Metazoa</taxon>
        <taxon>Chordata</taxon>
        <taxon>Craniata</taxon>
        <taxon>Vertebrata</taxon>
        <taxon>Euteleostomi</taxon>
        <taxon>Mammalia</taxon>
        <taxon>Eutheria</taxon>
        <taxon>Euarchontoglires</taxon>
        <taxon>Primates</taxon>
        <taxon>Haplorrhini</taxon>
        <taxon>Platyrrhini</taxon>
        <taxon>Cebidae</taxon>
        <taxon>Cebinae</taxon>
        <taxon>Sapajus</taxon>
    </lineage>
</organism>
<name>ACKR1_SAPAP</name>
<comment type="function">
    <text evidence="1">Atypical chemokine receptor that controls chemokine levels and localization via high-affinity chemokine binding that is uncoupled from classic ligand-driven signal transduction cascades, resulting instead in chemokine sequestration, degradation, or transcytosis. Also known as interceptor (internalizing receptor) or chemokine-scavenging receptor or chemokine decoy receptor. Has a promiscuous chemokine-binding profile, interacting with inflammatory chemokines of both the CXC and the CC subfamilies but not with homeostatic chemokines. Acts as a receptor for chemokines including CCL2, CCL5, CCL7, CCL11, CCL13, CCL14, CCL17, CXCL5, CXCL6, IL8/CXCL8, CXCL11, GRO, RANTES, MCP-1 and TARC. May regulate chemokine bioavailability and, consequently, leukocyte recruitment through two distinct mechanisms: when expressed in endothelial cells, it sustains the abluminal to luminal transcytosis of tissue-derived chemokines and their subsequent presentation to circulating leukocytes; when expressed in erythrocytes, serves as blood reservoir of cognate chemokines but also as a chemokine sink, buffering potential surges in plasma chemokine levels (By similarity).</text>
</comment>
<comment type="subcellular location">
    <subcellularLocation>
        <location evidence="1">Early endosome</location>
    </subcellularLocation>
    <subcellularLocation>
        <location evidence="1">Recycling endosome</location>
    </subcellularLocation>
    <subcellularLocation>
        <location>Membrane</location>
        <topology>Multi-pass membrane protein</topology>
    </subcellularLocation>
    <text evidence="1">Predominantly localizes to endocytic vesicles, and upon stimulation by the ligand is internalized via caveolae. Once internalized, the ligand dissociates from the receptor, and is targeted to degradation while the receptor is recycled back to the cell membrane (By similarity).</text>
</comment>
<comment type="similarity">
    <text evidence="3">Belongs to the G-protein coupled receptor 1 family. Atypical chemokine receptor subfamily.</text>
</comment>
<evidence type="ECO:0000250" key="1"/>
<evidence type="ECO:0000255" key="2"/>
<evidence type="ECO:0000305" key="3"/>
<gene>
    <name type="primary">ACKR1</name>
    <name type="synonym">DARC</name>
    <name type="synonym">FY</name>
</gene>